<proteinExistence type="inferred from homology"/>
<feature type="chain" id="PRO_1000206521" description="Large ribosomal subunit protein bL31">
    <location>
        <begin position="1"/>
        <end position="70"/>
    </location>
</feature>
<feature type="binding site" evidence="1">
    <location>
        <position position="16"/>
    </location>
    <ligand>
        <name>Zn(2+)</name>
        <dbReference type="ChEBI" id="CHEBI:29105"/>
    </ligand>
</feature>
<feature type="binding site" evidence="1">
    <location>
        <position position="18"/>
    </location>
    <ligand>
        <name>Zn(2+)</name>
        <dbReference type="ChEBI" id="CHEBI:29105"/>
    </ligand>
</feature>
<feature type="binding site" evidence="1">
    <location>
        <position position="37"/>
    </location>
    <ligand>
        <name>Zn(2+)</name>
        <dbReference type="ChEBI" id="CHEBI:29105"/>
    </ligand>
</feature>
<feature type="binding site" evidence="1">
    <location>
        <position position="40"/>
    </location>
    <ligand>
        <name>Zn(2+)</name>
        <dbReference type="ChEBI" id="CHEBI:29105"/>
    </ligand>
</feature>
<feature type="modified residue" description="N6-acetyllysine" evidence="1">
    <location>
        <position position="8"/>
    </location>
</feature>
<gene>
    <name evidence="1" type="primary">rpmE</name>
    <name type="ordered locus">BWG_3605</name>
</gene>
<reference key="1">
    <citation type="journal article" date="2009" name="J. Bacteriol.">
        <title>Genomic sequencing reveals regulatory mutations and recombinational events in the widely used MC4100 lineage of Escherichia coli K-12.</title>
        <authorList>
            <person name="Ferenci T."/>
            <person name="Zhou Z."/>
            <person name="Betteridge T."/>
            <person name="Ren Y."/>
            <person name="Liu Y."/>
            <person name="Feng L."/>
            <person name="Reeves P.R."/>
            <person name="Wang L."/>
        </authorList>
    </citation>
    <scope>NUCLEOTIDE SEQUENCE [LARGE SCALE GENOMIC DNA]</scope>
    <source>
        <strain>K12 / MC4100 / BW2952</strain>
    </source>
</reference>
<dbReference type="EMBL" id="CP001396">
    <property type="protein sequence ID" value="ACR61868.1"/>
    <property type="molecule type" value="Genomic_DNA"/>
</dbReference>
<dbReference type="RefSeq" id="WP_000710769.1">
    <property type="nucleotide sequence ID" value="NC_012759.1"/>
</dbReference>
<dbReference type="SMR" id="C5A0A3"/>
<dbReference type="GeneID" id="93777962"/>
<dbReference type="KEGG" id="ebw:BWG_3605"/>
<dbReference type="HOGENOM" id="CLU_114306_4_3_6"/>
<dbReference type="GO" id="GO:1990904">
    <property type="term" value="C:ribonucleoprotein complex"/>
    <property type="evidence" value="ECO:0007669"/>
    <property type="project" value="UniProtKB-KW"/>
</dbReference>
<dbReference type="GO" id="GO:0005840">
    <property type="term" value="C:ribosome"/>
    <property type="evidence" value="ECO:0007669"/>
    <property type="project" value="UniProtKB-KW"/>
</dbReference>
<dbReference type="GO" id="GO:0046872">
    <property type="term" value="F:metal ion binding"/>
    <property type="evidence" value="ECO:0007669"/>
    <property type="project" value="UniProtKB-KW"/>
</dbReference>
<dbReference type="GO" id="GO:0019843">
    <property type="term" value="F:rRNA binding"/>
    <property type="evidence" value="ECO:0007669"/>
    <property type="project" value="UniProtKB-KW"/>
</dbReference>
<dbReference type="GO" id="GO:0003735">
    <property type="term" value="F:structural constituent of ribosome"/>
    <property type="evidence" value="ECO:0007669"/>
    <property type="project" value="InterPro"/>
</dbReference>
<dbReference type="GO" id="GO:0006412">
    <property type="term" value="P:translation"/>
    <property type="evidence" value="ECO:0007669"/>
    <property type="project" value="UniProtKB-UniRule"/>
</dbReference>
<dbReference type="FunFam" id="4.10.830.30:FF:000001">
    <property type="entry name" value="50S ribosomal protein L31"/>
    <property type="match status" value="1"/>
</dbReference>
<dbReference type="Gene3D" id="4.10.830.30">
    <property type="entry name" value="Ribosomal protein L31"/>
    <property type="match status" value="1"/>
</dbReference>
<dbReference type="HAMAP" id="MF_00501">
    <property type="entry name" value="Ribosomal_bL31_1"/>
    <property type="match status" value="1"/>
</dbReference>
<dbReference type="InterPro" id="IPR034704">
    <property type="entry name" value="Ribosomal_bL28/bL31-like_sf"/>
</dbReference>
<dbReference type="InterPro" id="IPR002150">
    <property type="entry name" value="Ribosomal_bL31"/>
</dbReference>
<dbReference type="InterPro" id="IPR027491">
    <property type="entry name" value="Ribosomal_bL31_A"/>
</dbReference>
<dbReference type="InterPro" id="IPR042105">
    <property type="entry name" value="Ribosomal_bL31_sf"/>
</dbReference>
<dbReference type="NCBIfam" id="TIGR00105">
    <property type="entry name" value="L31"/>
    <property type="match status" value="1"/>
</dbReference>
<dbReference type="NCBIfam" id="NF000612">
    <property type="entry name" value="PRK00019.1"/>
    <property type="match status" value="1"/>
</dbReference>
<dbReference type="NCBIfam" id="NF001809">
    <property type="entry name" value="PRK00528.1"/>
    <property type="match status" value="1"/>
</dbReference>
<dbReference type="PANTHER" id="PTHR33280">
    <property type="entry name" value="50S RIBOSOMAL PROTEIN L31, CHLOROPLASTIC"/>
    <property type="match status" value="1"/>
</dbReference>
<dbReference type="PANTHER" id="PTHR33280:SF6">
    <property type="entry name" value="LARGE RIBOSOMAL SUBUNIT PROTEIN BL31A"/>
    <property type="match status" value="1"/>
</dbReference>
<dbReference type="Pfam" id="PF01197">
    <property type="entry name" value="Ribosomal_L31"/>
    <property type="match status" value="1"/>
</dbReference>
<dbReference type="PRINTS" id="PR01249">
    <property type="entry name" value="RIBOSOMALL31"/>
</dbReference>
<dbReference type="SUPFAM" id="SSF143800">
    <property type="entry name" value="L28p-like"/>
    <property type="match status" value="1"/>
</dbReference>
<dbReference type="PROSITE" id="PS01143">
    <property type="entry name" value="RIBOSOMAL_L31"/>
    <property type="match status" value="1"/>
</dbReference>
<sequence length="70" mass="7871">MKKDIHPKYEEITASCSCGNVMKIRSTVGHDLNLDVCSKCHPFFTGKQRDVATGGRVDRFNKRFNIPGSK</sequence>
<protein>
    <recommendedName>
        <fullName evidence="1">Large ribosomal subunit protein bL31</fullName>
    </recommendedName>
    <alternativeName>
        <fullName evidence="2">50S ribosomal protein L31</fullName>
    </alternativeName>
</protein>
<accession>C5A0A3</accession>
<comment type="function">
    <text evidence="1">Binds the 23S rRNA.</text>
</comment>
<comment type="cofactor">
    <cofactor evidence="1">
        <name>Zn(2+)</name>
        <dbReference type="ChEBI" id="CHEBI:29105"/>
    </cofactor>
    <text evidence="1">Binds 1 zinc ion per subunit.</text>
</comment>
<comment type="subunit">
    <text evidence="1">Part of the 50S ribosomal subunit.</text>
</comment>
<comment type="similarity">
    <text evidence="1">Belongs to the bacterial ribosomal protein bL31 family. Type A subfamily.</text>
</comment>
<keyword id="KW-0007">Acetylation</keyword>
<keyword id="KW-0479">Metal-binding</keyword>
<keyword id="KW-0687">Ribonucleoprotein</keyword>
<keyword id="KW-0689">Ribosomal protein</keyword>
<keyword id="KW-0694">RNA-binding</keyword>
<keyword id="KW-0699">rRNA-binding</keyword>
<keyword id="KW-0862">Zinc</keyword>
<name>RL31_ECOBW</name>
<organism>
    <name type="scientific">Escherichia coli (strain K12 / MC4100 / BW2952)</name>
    <dbReference type="NCBI Taxonomy" id="595496"/>
    <lineage>
        <taxon>Bacteria</taxon>
        <taxon>Pseudomonadati</taxon>
        <taxon>Pseudomonadota</taxon>
        <taxon>Gammaproteobacteria</taxon>
        <taxon>Enterobacterales</taxon>
        <taxon>Enterobacteriaceae</taxon>
        <taxon>Escherichia</taxon>
    </lineage>
</organism>
<evidence type="ECO:0000255" key="1">
    <source>
        <dbReference type="HAMAP-Rule" id="MF_00501"/>
    </source>
</evidence>
<evidence type="ECO:0000305" key="2"/>